<feature type="chain" id="PRO_0000194789" description="Nuclear transport factor 2">
    <location>
        <begin position="1"/>
        <end position="124"/>
    </location>
</feature>
<feature type="domain" description="NTF2" evidence="2">
    <location>
        <begin position="8"/>
        <end position="121"/>
    </location>
</feature>
<comment type="function">
    <text evidence="1">Facilitates protein transport into the nucleus. Could be part of a multicomponent system of cytosolic factors that assemble at the pore complex during nuclear import (By similarity).</text>
</comment>
<comment type="subcellular location">
    <subcellularLocation>
        <location evidence="1">Cytoplasm</location>
    </subcellularLocation>
</comment>
<evidence type="ECO:0000250" key="1"/>
<evidence type="ECO:0000255" key="2">
    <source>
        <dbReference type="PROSITE-ProRule" id="PRU00137"/>
    </source>
</evidence>
<sequence>MSLDFTAIATQFVAHYYSTFDSDRKNLAGLYRDNSMLTFEGAQSLGAQGITEKLTSLPFQKVKHEYGPPDAQPTATGGIIILVTGQLIVDDEQRPLGYSQAFQLSQDASGQWFVFNDIFKLVLL</sequence>
<protein>
    <recommendedName>
        <fullName>Nuclear transport factor 2</fullName>
        <shortName>NTF-2</shortName>
    </recommendedName>
</protein>
<proteinExistence type="evidence at transcript level"/>
<organism>
    <name type="scientific">Neurospora crassa (strain ATCC 24698 / 74-OR23-1A / CBS 708.71 / DSM 1257 / FGSC 987)</name>
    <dbReference type="NCBI Taxonomy" id="367110"/>
    <lineage>
        <taxon>Eukaryota</taxon>
        <taxon>Fungi</taxon>
        <taxon>Dikarya</taxon>
        <taxon>Ascomycota</taxon>
        <taxon>Pezizomycotina</taxon>
        <taxon>Sordariomycetes</taxon>
        <taxon>Sordariomycetidae</taxon>
        <taxon>Sordariales</taxon>
        <taxon>Sordariaceae</taxon>
        <taxon>Neurospora</taxon>
    </lineage>
</organism>
<dbReference type="EMBL" id="Y13237">
    <property type="protein sequence ID" value="CAA73689.1"/>
    <property type="molecule type" value="mRNA"/>
</dbReference>
<dbReference type="EMBL" id="BX908811">
    <property type="protein sequence ID" value="CAF06121.1"/>
    <property type="molecule type" value="Genomic_DNA"/>
</dbReference>
<dbReference type="EMBL" id="CM002241">
    <property type="protein sequence ID" value="EAA31056.2"/>
    <property type="molecule type" value="Genomic_DNA"/>
</dbReference>
<dbReference type="RefSeq" id="XP_960292.2">
    <property type="nucleotide sequence ID" value="XM_955199.2"/>
</dbReference>
<dbReference type="SMR" id="P87102"/>
<dbReference type="FunCoup" id="P87102">
    <property type="interactions" value="1165"/>
</dbReference>
<dbReference type="STRING" id="367110.P87102"/>
<dbReference type="PaxDb" id="5141-EFNCRP00000004512"/>
<dbReference type="EnsemblFungi" id="EAA31056">
    <property type="protein sequence ID" value="EAA31056"/>
    <property type="gene ID" value="NCU04759"/>
</dbReference>
<dbReference type="GeneID" id="3876439"/>
<dbReference type="KEGG" id="ncr:NCU04759"/>
<dbReference type="VEuPathDB" id="FungiDB:NCU04759"/>
<dbReference type="HOGENOM" id="CLU_131642_0_0_1"/>
<dbReference type="InParanoid" id="P87102"/>
<dbReference type="OrthoDB" id="6507044at2759"/>
<dbReference type="Proteomes" id="UP000001805">
    <property type="component" value="Chromosome 5, Linkage Group VI"/>
</dbReference>
<dbReference type="GO" id="GO:0005737">
    <property type="term" value="C:cytoplasm"/>
    <property type="evidence" value="ECO:0007669"/>
    <property type="project" value="UniProtKB-SubCell"/>
</dbReference>
<dbReference type="GO" id="GO:0044613">
    <property type="term" value="C:nuclear pore central transport channel"/>
    <property type="evidence" value="ECO:0000318"/>
    <property type="project" value="GO_Central"/>
</dbReference>
<dbReference type="GO" id="GO:0061608">
    <property type="term" value="F:nuclear import signal receptor activity"/>
    <property type="evidence" value="ECO:0000318"/>
    <property type="project" value="GO_Central"/>
</dbReference>
<dbReference type="GO" id="GO:0006606">
    <property type="term" value="P:protein import into nucleus"/>
    <property type="evidence" value="ECO:0000318"/>
    <property type="project" value="GO_Central"/>
</dbReference>
<dbReference type="CDD" id="cd00780">
    <property type="entry name" value="NTF2"/>
    <property type="match status" value="1"/>
</dbReference>
<dbReference type="FunFam" id="3.10.450.50:FF:000005">
    <property type="entry name" value="Nuclear transport factor 2"/>
    <property type="match status" value="1"/>
</dbReference>
<dbReference type="Gene3D" id="3.10.450.50">
    <property type="match status" value="1"/>
</dbReference>
<dbReference type="InterPro" id="IPR045875">
    <property type="entry name" value="NTF2"/>
</dbReference>
<dbReference type="InterPro" id="IPR032710">
    <property type="entry name" value="NTF2-like_dom_sf"/>
</dbReference>
<dbReference type="InterPro" id="IPR002075">
    <property type="entry name" value="NTF2_dom"/>
</dbReference>
<dbReference type="InterPro" id="IPR018222">
    <property type="entry name" value="Nuclear_transport_factor_2_euk"/>
</dbReference>
<dbReference type="PANTHER" id="PTHR12612">
    <property type="entry name" value="NUCLEAR TRANSPORT FACTOR 2"/>
    <property type="match status" value="1"/>
</dbReference>
<dbReference type="Pfam" id="PF02136">
    <property type="entry name" value="NTF2"/>
    <property type="match status" value="1"/>
</dbReference>
<dbReference type="SUPFAM" id="SSF54427">
    <property type="entry name" value="NTF2-like"/>
    <property type="match status" value="1"/>
</dbReference>
<dbReference type="PROSITE" id="PS50177">
    <property type="entry name" value="NTF2_DOMAIN"/>
    <property type="match status" value="1"/>
</dbReference>
<gene>
    <name type="primary">ntf2</name>
    <name type="ORF">H4H7.090</name>
    <name type="ORF">NCU04759</name>
</gene>
<accession>P87102</accession>
<accession>Q7S694</accession>
<keyword id="KW-0963">Cytoplasm</keyword>
<keyword id="KW-0653">Protein transport</keyword>
<keyword id="KW-1185">Reference proteome</keyword>
<keyword id="KW-0813">Transport</keyword>
<name>NTF2_NEUCR</name>
<reference key="1">
    <citation type="submission" date="1997-05" db="EMBL/GenBank/DDBJ databases">
        <authorList>
            <person name="Meyer U."/>
            <person name="Meyer M."/>
            <person name="Techel D."/>
            <person name="Toeken K."/>
            <person name="Rensing L."/>
        </authorList>
    </citation>
    <scope>NUCLEOTIDE SEQUENCE [MRNA]</scope>
    <source>
        <strain>Bd-A / FGSC 1858</strain>
    </source>
</reference>
<reference key="2">
    <citation type="journal article" date="2003" name="Nucleic Acids Res.">
        <title>What's in the genome of a filamentous fungus? Analysis of the Neurospora genome sequence.</title>
        <authorList>
            <person name="Mannhaupt G."/>
            <person name="Montrone C."/>
            <person name="Haase D."/>
            <person name="Mewes H.-W."/>
            <person name="Aign V."/>
            <person name="Hoheisel J.D."/>
            <person name="Fartmann B."/>
            <person name="Nyakatura G."/>
            <person name="Kempken F."/>
            <person name="Maier J."/>
            <person name="Schulte U."/>
        </authorList>
    </citation>
    <scope>NUCLEOTIDE SEQUENCE [LARGE SCALE GENOMIC DNA]</scope>
    <source>
        <strain>ATCC 24698 / 74-OR23-1A / CBS 708.71 / DSM 1257 / FGSC 987</strain>
    </source>
</reference>
<reference key="3">
    <citation type="journal article" date="2003" name="Nature">
        <title>The genome sequence of the filamentous fungus Neurospora crassa.</title>
        <authorList>
            <person name="Galagan J.E."/>
            <person name="Calvo S.E."/>
            <person name="Borkovich K.A."/>
            <person name="Selker E.U."/>
            <person name="Read N.D."/>
            <person name="Jaffe D.B."/>
            <person name="FitzHugh W."/>
            <person name="Ma L.-J."/>
            <person name="Smirnov S."/>
            <person name="Purcell S."/>
            <person name="Rehman B."/>
            <person name="Elkins T."/>
            <person name="Engels R."/>
            <person name="Wang S."/>
            <person name="Nielsen C.B."/>
            <person name="Butler J."/>
            <person name="Endrizzi M."/>
            <person name="Qui D."/>
            <person name="Ianakiev P."/>
            <person name="Bell-Pedersen D."/>
            <person name="Nelson M.A."/>
            <person name="Werner-Washburne M."/>
            <person name="Selitrennikoff C.P."/>
            <person name="Kinsey J.A."/>
            <person name="Braun E.L."/>
            <person name="Zelter A."/>
            <person name="Schulte U."/>
            <person name="Kothe G.O."/>
            <person name="Jedd G."/>
            <person name="Mewes H.-W."/>
            <person name="Staben C."/>
            <person name="Marcotte E."/>
            <person name="Greenberg D."/>
            <person name="Roy A."/>
            <person name="Foley K."/>
            <person name="Naylor J."/>
            <person name="Stange-Thomann N."/>
            <person name="Barrett R."/>
            <person name="Gnerre S."/>
            <person name="Kamal M."/>
            <person name="Kamvysselis M."/>
            <person name="Mauceli E.W."/>
            <person name="Bielke C."/>
            <person name="Rudd S."/>
            <person name="Frishman D."/>
            <person name="Krystofova S."/>
            <person name="Rasmussen C."/>
            <person name="Metzenberg R.L."/>
            <person name="Perkins D.D."/>
            <person name="Kroken S."/>
            <person name="Cogoni C."/>
            <person name="Macino G."/>
            <person name="Catcheside D.E.A."/>
            <person name="Li W."/>
            <person name="Pratt R.J."/>
            <person name="Osmani S.A."/>
            <person name="DeSouza C.P.C."/>
            <person name="Glass N.L."/>
            <person name="Orbach M.J."/>
            <person name="Berglund J.A."/>
            <person name="Voelker R."/>
            <person name="Yarden O."/>
            <person name="Plamann M."/>
            <person name="Seiler S."/>
            <person name="Dunlap J.C."/>
            <person name="Radford A."/>
            <person name="Aramayo R."/>
            <person name="Natvig D.O."/>
            <person name="Alex L.A."/>
            <person name="Mannhaupt G."/>
            <person name="Ebbole D.J."/>
            <person name="Freitag M."/>
            <person name="Paulsen I."/>
            <person name="Sachs M.S."/>
            <person name="Lander E.S."/>
            <person name="Nusbaum C."/>
            <person name="Birren B.W."/>
        </authorList>
    </citation>
    <scope>NUCLEOTIDE SEQUENCE [LARGE SCALE GENOMIC DNA]</scope>
    <source>
        <strain>ATCC 24698 / 74-OR23-1A / CBS 708.71 / DSM 1257 / FGSC 987</strain>
    </source>
</reference>